<comment type="function">
    <text evidence="4">May be involved in the synthesis of minor phospholipids and in modulation of IP3-mediated signal transduction.</text>
</comment>
<comment type="catalytic activity">
    <reaction evidence="4">
        <text>a 1,2-diacyl-sn-glycero-3-phosphate + CTP + H(+) = a CDP-1,2-diacyl-sn-glycerol + diphosphate</text>
        <dbReference type="Rhea" id="RHEA:16229"/>
        <dbReference type="ChEBI" id="CHEBI:15378"/>
        <dbReference type="ChEBI" id="CHEBI:33019"/>
        <dbReference type="ChEBI" id="CHEBI:37563"/>
        <dbReference type="ChEBI" id="CHEBI:58332"/>
        <dbReference type="ChEBI" id="CHEBI:58608"/>
        <dbReference type="EC" id="2.7.7.41"/>
    </reaction>
</comment>
<comment type="cofactor">
    <cofactor evidence="1">
        <name>Mg(2+)</name>
        <dbReference type="ChEBI" id="CHEBI:18420"/>
    </cofactor>
    <text evidence="1">Requires a divalent cation for activity.</text>
</comment>
<comment type="pathway">
    <text evidence="4">Phospholipid metabolism; CDP-diacylglycerol biosynthesis; CDP-diacylglycerol from sn-glycerol 3-phosphate: step 3/3.</text>
</comment>
<comment type="subcellular location">
    <subcellularLocation>
        <location evidence="2">Membrane</location>
        <topology evidence="2">Multi-pass membrane protein</topology>
    </subcellularLocation>
</comment>
<comment type="similarity">
    <text evidence="6">Belongs to the CDS family.</text>
</comment>
<protein>
    <recommendedName>
        <fullName evidence="5">Phosphatidate cytidylyltransferase 1</fullName>
        <ecNumber evidence="4">2.7.7.41</ecNumber>
    </recommendedName>
    <alternativeName>
        <fullName>CDP-DAG synthase 1</fullName>
    </alternativeName>
    <alternativeName>
        <fullName>CDP-DG synthase 1</fullName>
    </alternativeName>
    <alternativeName>
        <fullName>CDP-diacylglycerol synthase 1</fullName>
        <shortName>CDS1</shortName>
    </alternativeName>
    <alternativeName>
        <fullName>CDP-diglyceride pyrophosphorylase 1</fullName>
    </alternativeName>
    <alternativeName>
        <fullName>CDP-diglyceride synthase 1</fullName>
    </alternativeName>
    <alternativeName>
        <fullName>CTP:phosphatidate cytidylyltransferase 1</fullName>
    </alternativeName>
</protein>
<sequence length="421" mass="48660">MEEENVTSSPSTPVHRLRHRRRSNEVVTDGDKVNASPLLVNDRNKYKSFMVRTYSTLWMIGGFVLVVYMGHLYITAMVVVIQIFMAKELFNLLRKAPEDKCLPYIKQLNWHFFFTAMLFVYGRILSQRLANTMTADQFFYRLVSGLIKYHMAICYLLYIIGFMWFILTLKKKMYKYQFGQYAWTHMILIVVFTQSSFTVANIFEGIFWFLLPASLIIINDIFAYIFGFFFGRTPLIKLSPKKTWEGFIGASVTTIISAFVLANILGRFPWLTCPRQDLSTGWLQCDADPLFKPEPFALPAWIPEWFPWKEMTILPVQWHALCLGLFASIIAPFGGFFASGFKRAFKIKDFGDSIPGHGGITDRMDCQMVMAVFAYIYLQSFIVSQSVSVDKILDQILTNLTFEEQQALFVKLGQMLKDKLS</sequence>
<name>CDS1_ARATH</name>
<feature type="chain" id="PRO_0000090723" description="Phosphatidate cytidylyltransferase 1">
    <location>
        <begin position="1"/>
        <end position="421"/>
    </location>
</feature>
<feature type="transmembrane region" description="Helical; Name=1" evidence="2">
    <location>
        <begin position="60"/>
        <end position="80"/>
    </location>
</feature>
<feature type="transmembrane region" description="Helical; Name=2" evidence="2">
    <location>
        <begin position="102"/>
        <end position="122"/>
    </location>
</feature>
<feature type="transmembrane region" description="Helical; Name=3" evidence="2">
    <location>
        <begin position="149"/>
        <end position="169"/>
    </location>
</feature>
<feature type="transmembrane region" description="Helical; Name=4" evidence="2">
    <location>
        <begin position="183"/>
        <end position="203"/>
    </location>
</feature>
<feature type="transmembrane region" description="Helical; Name=5" evidence="2">
    <location>
        <begin position="206"/>
        <end position="226"/>
    </location>
</feature>
<feature type="transmembrane region" description="Helical; Name=6" evidence="2">
    <location>
        <begin position="246"/>
        <end position="266"/>
    </location>
</feature>
<feature type="transmembrane region" description="Helical; Name=7" evidence="2">
    <location>
        <begin position="321"/>
        <end position="341"/>
    </location>
</feature>
<feature type="transmembrane region" description="Helical; Name=8" evidence="2">
    <location>
        <begin position="369"/>
        <end position="389"/>
    </location>
</feature>
<feature type="region of interest" description="Disordered" evidence="3">
    <location>
        <begin position="1"/>
        <end position="26"/>
    </location>
</feature>
<feature type="compositionally biased region" description="Polar residues" evidence="3">
    <location>
        <begin position="1"/>
        <end position="12"/>
    </location>
</feature>
<feature type="modified residue" description="N-acetylmethionine" evidence="9">
    <location>
        <position position="1"/>
    </location>
</feature>
<evidence type="ECO:0000250" key="1">
    <source>
        <dbReference type="UniProtKB" id="Q94A03"/>
    </source>
</evidence>
<evidence type="ECO:0000255" key="2"/>
<evidence type="ECO:0000256" key="3">
    <source>
        <dbReference type="SAM" id="MobiDB-lite"/>
    </source>
</evidence>
<evidence type="ECO:0000269" key="4">
    <source>
    </source>
</evidence>
<evidence type="ECO:0000303" key="5">
    <source>
    </source>
</evidence>
<evidence type="ECO:0000305" key="6"/>
<evidence type="ECO:0000312" key="7">
    <source>
        <dbReference type="Araport" id="AT1G62430"/>
    </source>
</evidence>
<evidence type="ECO:0000312" key="8">
    <source>
        <dbReference type="EMBL" id="AAF70845.1"/>
    </source>
</evidence>
<evidence type="ECO:0007744" key="9">
    <source>
    </source>
</evidence>
<dbReference type="EC" id="2.7.7.41" evidence="4"/>
<dbReference type="EMBL" id="X94306">
    <property type="protein sequence ID" value="CAA63969.1"/>
    <property type="molecule type" value="mRNA"/>
</dbReference>
<dbReference type="EMBL" id="AC003113">
    <property type="protein sequence ID" value="AAF70845.1"/>
    <property type="molecule type" value="Genomic_DNA"/>
</dbReference>
<dbReference type="EMBL" id="CP002684">
    <property type="protein sequence ID" value="AEE33967.1"/>
    <property type="molecule type" value="Genomic_DNA"/>
</dbReference>
<dbReference type="PIR" id="T01455">
    <property type="entry name" value="T01455"/>
</dbReference>
<dbReference type="RefSeq" id="NP_176433.2">
    <property type="nucleotide sequence ID" value="NM_104923.4"/>
</dbReference>
<dbReference type="SMR" id="O04928"/>
<dbReference type="FunCoup" id="O04928">
    <property type="interactions" value="3732"/>
</dbReference>
<dbReference type="STRING" id="3702.O04928"/>
<dbReference type="iPTMnet" id="O04928"/>
<dbReference type="PaxDb" id="3702-AT1G62430.1"/>
<dbReference type="ProteomicsDB" id="223977"/>
<dbReference type="EnsemblPlants" id="AT1G62430.1">
    <property type="protein sequence ID" value="AT1G62430.1"/>
    <property type="gene ID" value="AT1G62430"/>
</dbReference>
<dbReference type="GeneID" id="842541"/>
<dbReference type="Gramene" id="AT1G62430.1">
    <property type="protein sequence ID" value="AT1G62430.1"/>
    <property type="gene ID" value="AT1G62430"/>
</dbReference>
<dbReference type="KEGG" id="ath:AT1G62430"/>
<dbReference type="Araport" id="AT1G62430"/>
<dbReference type="TAIR" id="AT1G62430">
    <property type="gene designation" value="CDS1"/>
</dbReference>
<dbReference type="eggNOG" id="KOG1440">
    <property type="taxonomic scope" value="Eukaryota"/>
</dbReference>
<dbReference type="HOGENOM" id="CLU_023471_2_0_1"/>
<dbReference type="InParanoid" id="O04928"/>
<dbReference type="OMA" id="FPWKEMT"/>
<dbReference type="OrthoDB" id="10260889at2759"/>
<dbReference type="PhylomeDB" id="O04928"/>
<dbReference type="BioCyc" id="MetaCyc:AT1G62430-MONOMER"/>
<dbReference type="BRENDA" id="2.7.7.41">
    <property type="organism ID" value="399"/>
</dbReference>
<dbReference type="UniPathway" id="UPA00557">
    <property type="reaction ID" value="UER00614"/>
</dbReference>
<dbReference type="PRO" id="PR:O04928"/>
<dbReference type="Proteomes" id="UP000006548">
    <property type="component" value="Chromosome 1"/>
</dbReference>
<dbReference type="ExpressionAtlas" id="O04928">
    <property type="expression patterns" value="baseline and differential"/>
</dbReference>
<dbReference type="GO" id="GO:0005783">
    <property type="term" value="C:endoplasmic reticulum"/>
    <property type="evidence" value="ECO:0000314"/>
    <property type="project" value="TAIR"/>
</dbReference>
<dbReference type="GO" id="GO:0016020">
    <property type="term" value="C:membrane"/>
    <property type="evidence" value="ECO:0000250"/>
    <property type="project" value="TAIR"/>
</dbReference>
<dbReference type="GO" id="GO:0005634">
    <property type="term" value="C:nucleus"/>
    <property type="evidence" value="ECO:0007005"/>
    <property type="project" value="TAIR"/>
</dbReference>
<dbReference type="GO" id="GO:0004605">
    <property type="term" value="F:phosphatidate cytidylyltransferase activity"/>
    <property type="evidence" value="ECO:0000314"/>
    <property type="project" value="TAIR"/>
</dbReference>
<dbReference type="GO" id="GO:0016024">
    <property type="term" value="P:CDP-diacylglycerol biosynthetic process"/>
    <property type="evidence" value="ECO:0007669"/>
    <property type="project" value="UniProtKB-UniPathway"/>
</dbReference>
<dbReference type="GO" id="GO:0080186">
    <property type="term" value="P:developmental vegetative growth"/>
    <property type="evidence" value="ECO:0000316"/>
    <property type="project" value="TAIR"/>
</dbReference>
<dbReference type="GO" id="GO:0008654">
    <property type="term" value="P:phospholipid biosynthetic process"/>
    <property type="evidence" value="ECO:0000304"/>
    <property type="project" value="TAIR"/>
</dbReference>
<dbReference type="InterPro" id="IPR000374">
    <property type="entry name" value="PC_trans"/>
</dbReference>
<dbReference type="InterPro" id="IPR016720">
    <property type="entry name" value="PC_Trfase_euk"/>
</dbReference>
<dbReference type="PANTHER" id="PTHR13773">
    <property type="entry name" value="PHOSPHATIDATE CYTIDYLYLTRANSFERASE"/>
    <property type="match status" value="1"/>
</dbReference>
<dbReference type="PANTHER" id="PTHR13773:SF35">
    <property type="entry name" value="PHOSPHATIDATE CYTIDYLYLTRANSFERASE 1"/>
    <property type="match status" value="1"/>
</dbReference>
<dbReference type="Pfam" id="PF01148">
    <property type="entry name" value="CTP_transf_1"/>
    <property type="match status" value="1"/>
</dbReference>
<dbReference type="PIRSF" id="PIRSF018269">
    <property type="entry name" value="PC_trans_euk"/>
    <property type="match status" value="1"/>
</dbReference>
<dbReference type="PROSITE" id="PS01315">
    <property type="entry name" value="CDS"/>
    <property type="match status" value="1"/>
</dbReference>
<accession>O04928</accession>
<accession>O48808</accession>
<gene>
    <name evidence="5" type="primary">CDS1</name>
    <name evidence="7" type="ordered locus">At1g62430</name>
    <name evidence="8" type="ORF">F24O1.17</name>
</gene>
<proteinExistence type="evidence at protein level"/>
<keyword id="KW-0007">Acetylation</keyword>
<keyword id="KW-0444">Lipid biosynthesis</keyword>
<keyword id="KW-0443">Lipid metabolism</keyword>
<keyword id="KW-0460">Magnesium</keyword>
<keyword id="KW-0472">Membrane</keyword>
<keyword id="KW-0548">Nucleotidyltransferase</keyword>
<keyword id="KW-0594">Phospholipid biosynthesis</keyword>
<keyword id="KW-1208">Phospholipid metabolism</keyword>
<keyword id="KW-1185">Reference proteome</keyword>
<keyword id="KW-0808">Transferase</keyword>
<keyword id="KW-0812">Transmembrane</keyword>
<keyword id="KW-1133">Transmembrane helix</keyword>
<reference key="1">
    <citation type="journal article" date="1997" name="Plant Physiol.">
        <title>Complementary DNAs encoding eukaryotic-type cytidine-5'-diphosphate-diacylglycerol synthases of two plant species.</title>
        <authorList>
            <person name="Kopka J."/>
            <person name="Ludewig M."/>
            <person name="Mueller-Roeber B."/>
        </authorList>
    </citation>
    <scope>NUCLEOTIDE SEQUENCE [MRNA]</scope>
    <source>
        <strain>cv. C24</strain>
        <tissue>Flower</tissue>
        <tissue>Silique</tissue>
    </source>
</reference>
<reference key="2">
    <citation type="journal article" date="2000" name="Nature">
        <title>Sequence and analysis of chromosome 1 of the plant Arabidopsis thaliana.</title>
        <authorList>
            <person name="Theologis A."/>
            <person name="Ecker J.R."/>
            <person name="Palm C.J."/>
            <person name="Federspiel N.A."/>
            <person name="Kaul S."/>
            <person name="White O."/>
            <person name="Alonso J."/>
            <person name="Altafi H."/>
            <person name="Araujo R."/>
            <person name="Bowman C.L."/>
            <person name="Brooks S.Y."/>
            <person name="Buehler E."/>
            <person name="Chan A."/>
            <person name="Chao Q."/>
            <person name="Chen H."/>
            <person name="Cheuk R.F."/>
            <person name="Chin C.W."/>
            <person name="Chung M.K."/>
            <person name="Conn L."/>
            <person name="Conway A.B."/>
            <person name="Conway A.R."/>
            <person name="Creasy T.H."/>
            <person name="Dewar K."/>
            <person name="Dunn P."/>
            <person name="Etgu P."/>
            <person name="Feldblyum T.V."/>
            <person name="Feng J.-D."/>
            <person name="Fong B."/>
            <person name="Fujii C.Y."/>
            <person name="Gill J.E."/>
            <person name="Goldsmith A.D."/>
            <person name="Haas B."/>
            <person name="Hansen N.F."/>
            <person name="Hughes B."/>
            <person name="Huizar L."/>
            <person name="Hunter J.L."/>
            <person name="Jenkins J."/>
            <person name="Johnson-Hopson C."/>
            <person name="Khan S."/>
            <person name="Khaykin E."/>
            <person name="Kim C.J."/>
            <person name="Koo H.L."/>
            <person name="Kremenetskaia I."/>
            <person name="Kurtz D.B."/>
            <person name="Kwan A."/>
            <person name="Lam B."/>
            <person name="Langin-Hooper S."/>
            <person name="Lee A."/>
            <person name="Lee J.M."/>
            <person name="Lenz C.A."/>
            <person name="Li J.H."/>
            <person name="Li Y.-P."/>
            <person name="Lin X."/>
            <person name="Liu S.X."/>
            <person name="Liu Z.A."/>
            <person name="Luros J.S."/>
            <person name="Maiti R."/>
            <person name="Marziali A."/>
            <person name="Militscher J."/>
            <person name="Miranda M."/>
            <person name="Nguyen M."/>
            <person name="Nierman W.C."/>
            <person name="Osborne B.I."/>
            <person name="Pai G."/>
            <person name="Peterson J."/>
            <person name="Pham P.K."/>
            <person name="Rizzo M."/>
            <person name="Rooney T."/>
            <person name="Rowley D."/>
            <person name="Sakano H."/>
            <person name="Salzberg S.L."/>
            <person name="Schwartz J.R."/>
            <person name="Shinn P."/>
            <person name="Southwick A.M."/>
            <person name="Sun H."/>
            <person name="Tallon L.J."/>
            <person name="Tambunga G."/>
            <person name="Toriumi M.J."/>
            <person name="Town C.D."/>
            <person name="Utterback T."/>
            <person name="Van Aken S."/>
            <person name="Vaysberg M."/>
            <person name="Vysotskaia V.S."/>
            <person name="Walker M."/>
            <person name="Wu D."/>
            <person name="Yu G."/>
            <person name="Fraser C.M."/>
            <person name="Venter J.C."/>
            <person name="Davis R.W."/>
        </authorList>
    </citation>
    <scope>NUCLEOTIDE SEQUENCE [LARGE SCALE GENOMIC DNA]</scope>
    <source>
        <strain>cv. Columbia</strain>
    </source>
</reference>
<reference key="3">
    <citation type="journal article" date="2017" name="Plant J.">
        <title>Araport11: a complete reannotation of the Arabidopsis thaliana reference genome.</title>
        <authorList>
            <person name="Cheng C.Y."/>
            <person name="Krishnakumar V."/>
            <person name="Chan A.P."/>
            <person name="Thibaud-Nissen F."/>
            <person name="Schobel S."/>
            <person name="Town C.D."/>
        </authorList>
    </citation>
    <scope>GENOME REANNOTATION</scope>
    <source>
        <strain>cv. Columbia</strain>
    </source>
</reference>
<reference key="4">
    <citation type="journal article" date="2010" name="Plant Physiol.">
        <title>Two closely related genes of Arabidopsis encode plastidial cytidinediphosphate diacylglycerol synthases essential for photoautotrophic growth.</title>
        <authorList>
            <person name="Haselier A."/>
            <person name="Akbari H."/>
            <person name="Weth A."/>
            <person name="Baumgartner W."/>
            <person name="Frentzen M."/>
        </authorList>
    </citation>
    <scope>FUNCTION</scope>
    <scope>CATALYTIC ACTIVITY</scope>
    <scope>PATHWAY</scope>
    <scope>GENE FAMILY</scope>
    <scope>NOMENCLATURE</scope>
</reference>
<reference key="5">
    <citation type="journal article" date="2012" name="Mol. Cell. Proteomics">
        <title>Comparative large-scale characterisation of plant vs. mammal proteins reveals similar and idiosyncratic N-alpha acetylation features.</title>
        <authorList>
            <person name="Bienvenut W.V."/>
            <person name="Sumpton D."/>
            <person name="Martinez A."/>
            <person name="Lilla S."/>
            <person name="Espagne C."/>
            <person name="Meinnel T."/>
            <person name="Giglione C."/>
        </authorList>
    </citation>
    <scope>ACETYLATION [LARGE SCALE ANALYSIS] AT MET-1</scope>
    <scope>IDENTIFICATION BY MASS SPECTROMETRY [LARGE SCALE ANALYSIS]</scope>
</reference>
<organism>
    <name type="scientific">Arabidopsis thaliana</name>
    <name type="common">Mouse-ear cress</name>
    <dbReference type="NCBI Taxonomy" id="3702"/>
    <lineage>
        <taxon>Eukaryota</taxon>
        <taxon>Viridiplantae</taxon>
        <taxon>Streptophyta</taxon>
        <taxon>Embryophyta</taxon>
        <taxon>Tracheophyta</taxon>
        <taxon>Spermatophyta</taxon>
        <taxon>Magnoliopsida</taxon>
        <taxon>eudicotyledons</taxon>
        <taxon>Gunneridae</taxon>
        <taxon>Pentapetalae</taxon>
        <taxon>rosids</taxon>
        <taxon>malvids</taxon>
        <taxon>Brassicales</taxon>
        <taxon>Brassicaceae</taxon>
        <taxon>Camelineae</taxon>
        <taxon>Arabidopsis</taxon>
    </lineage>
</organism>